<evidence type="ECO:0000255" key="1">
    <source>
        <dbReference type="HAMAP-Rule" id="MF_00283"/>
    </source>
</evidence>
<name>SYFB_CHLTA</name>
<gene>
    <name evidence="1" type="primary">pheT</name>
    <name type="ordered locus">CTA_0521</name>
</gene>
<keyword id="KW-0030">Aminoacyl-tRNA synthetase</keyword>
<keyword id="KW-0067">ATP-binding</keyword>
<keyword id="KW-0963">Cytoplasm</keyword>
<keyword id="KW-0436">Ligase</keyword>
<keyword id="KW-0460">Magnesium</keyword>
<keyword id="KW-0479">Metal-binding</keyword>
<keyword id="KW-0547">Nucleotide-binding</keyword>
<keyword id="KW-0648">Protein biosynthesis</keyword>
<keyword id="KW-0694">RNA-binding</keyword>
<keyword id="KW-0820">tRNA-binding</keyword>
<accession>Q3KLM3</accession>
<feature type="chain" id="PRO_0000232052" description="Phenylalanine--tRNA ligase beta subunit">
    <location>
        <begin position="1"/>
        <end position="790"/>
    </location>
</feature>
<feature type="domain" description="tRNA-binding" evidence="1">
    <location>
        <begin position="39"/>
        <end position="154"/>
    </location>
</feature>
<feature type="domain" description="B5" evidence="1">
    <location>
        <begin position="404"/>
        <end position="483"/>
    </location>
</feature>
<feature type="domain" description="FDX-ACB" evidence="1">
    <location>
        <begin position="694"/>
        <end position="790"/>
    </location>
</feature>
<feature type="binding site" evidence="1">
    <location>
        <position position="457"/>
    </location>
    <ligand>
        <name>Mg(2+)</name>
        <dbReference type="ChEBI" id="CHEBI:18420"/>
        <note>shared with alpha subunit</note>
    </ligand>
</feature>
<feature type="binding site" evidence="1">
    <location>
        <position position="463"/>
    </location>
    <ligand>
        <name>Mg(2+)</name>
        <dbReference type="ChEBI" id="CHEBI:18420"/>
        <note>shared with alpha subunit</note>
    </ligand>
</feature>
<feature type="binding site" evidence="1">
    <location>
        <position position="466"/>
    </location>
    <ligand>
        <name>Mg(2+)</name>
        <dbReference type="ChEBI" id="CHEBI:18420"/>
        <note>shared with alpha subunit</note>
    </ligand>
</feature>
<feature type="binding site" evidence="1">
    <location>
        <position position="467"/>
    </location>
    <ligand>
        <name>Mg(2+)</name>
        <dbReference type="ChEBI" id="CHEBI:18420"/>
        <note>shared with alpha subunit</note>
    </ligand>
</feature>
<protein>
    <recommendedName>
        <fullName evidence="1">Phenylalanine--tRNA ligase beta subunit</fullName>
        <ecNumber evidence="1">6.1.1.20</ecNumber>
    </recommendedName>
    <alternativeName>
        <fullName evidence="1">Phenylalanyl-tRNA synthetase beta subunit</fullName>
        <shortName evidence="1">PheRS</shortName>
    </alternativeName>
</protein>
<reference key="1">
    <citation type="journal article" date="2005" name="Infect. Immun.">
        <title>Comparative genomic analysis of Chlamydia trachomatis oculotropic and genitotropic strains.</title>
        <authorList>
            <person name="Carlson J.H."/>
            <person name="Porcella S.F."/>
            <person name="McClarty G."/>
            <person name="Caldwell H.D."/>
        </authorList>
    </citation>
    <scope>NUCLEOTIDE SEQUENCE [LARGE SCALE GENOMIC DNA]</scope>
    <source>
        <strain>ATCC VR-571B / DSM 19440 / HAR-13</strain>
    </source>
</reference>
<dbReference type="EC" id="6.1.1.20" evidence="1"/>
<dbReference type="EMBL" id="CP000051">
    <property type="protein sequence ID" value="AAX50749.1"/>
    <property type="molecule type" value="Genomic_DNA"/>
</dbReference>
<dbReference type="RefSeq" id="WP_011324747.1">
    <property type="nucleotide sequence ID" value="NC_007429.1"/>
</dbReference>
<dbReference type="SMR" id="Q3KLM3"/>
<dbReference type="KEGG" id="cta:CTA_0521"/>
<dbReference type="HOGENOM" id="CLU_016891_0_0_0"/>
<dbReference type="Proteomes" id="UP000002532">
    <property type="component" value="Chromosome"/>
</dbReference>
<dbReference type="GO" id="GO:0009328">
    <property type="term" value="C:phenylalanine-tRNA ligase complex"/>
    <property type="evidence" value="ECO:0007669"/>
    <property type="project" value="TreeGrafter"/>
</dbReference>
<dbReference type="GO" id="GO:0005524">
    <property type="term" value="F:ATP binding"/>
    <property type="evidence" value="ECO:0007669"/>
    <property type="project" value="UniProtKB-UniRule"/>
</dbReference>
<dbReference type="GO" id="GO:0000287">
    <property type="term" value="F:magnesium ion binding"/>
    <property type="evidence" value="ECO:0007669"/>
    <property type="project" value="UniProtKB-UniRule"/>
</dbReference>
<dbReference type="GO" id="GO:0004826">
    <property type="term" value="F:phenylalanine-tRNA ligase activity"/>
    <property type="evidence" value="ECO:0007669"/>
    <property type="project" value="UniProtKB-UniRule"/>
</dbReference>
<dbReference type="GO" id="GO:0000049">
    <property type="term" value="F:tRNA binding"/>
    <property type="evidence" value="ECO:0007669"/>
    <property type="project" value="UniProtKB-KW"/>
</dbReference>
<dbReference type="GO" id="GO:0006432">
    <property type="term" value="P:phenylalanyl-tRNA aminoacylation"/>
    <property type="evidence" value="ECO:0007669"/>
    <property type="project" value="UniProtKB-UniRule"/>
</dbReference>
<dbReference type="CDD" id="cd00769">
    <property type="entry name" value="PheRS_beta_core"/>
    <property type="match status" value="1"/>
</dbReference>
<dbReference type="CDD" id="cd02796">
    <property type="entry name" value="tRNA_bind_bactPheRS"/>
    <property type="match status" value="1"/>
</dbReference>
<dbReference type="FunFam" id="2.40.50.140:FF:000045">
    <property type="entry name" value="Phenylalanine--tRNA ligase beta subunit"/>
    <property type="match status" value="1"/>
</dbReference>
<dbReference type="Gene3D" id="3.30.56.10">
    <property type="match status" value="2"/>
</dbReference>
<dbReference type="Gene3D" id="3.30.930.10">
    <property type="entry name" value="Bira Bifunctional Protein, Domain 2"/>
    <property type="match status" value="1"/>
</dbReference>
<dbReference type="Gene3D" id="3.30.70.380">
    <property type="entry name" value="Ferrodoxin-fold anticodon-binding domain"/>
    <property type="match status" value="1"/>
</dbReference>
<dbReference type="Gene3D" id="2.40.50.140">
    <property type="entry name" value="Nucleic acid-binding proteins"/>
    <property type="match status" value="1"/>
</dbReference>
<dbReference type="Gene3D" id="3.50.40.10">
    <property type="entry name" value="Phenylalanyl-trna Synthetase, Chain B, domain 3"/>
    <property type="match status" value="1"/>
</dbReference>
<dbReference type="HAMAP" id="MF_00283">
    <property type="entry name" value="Phe_tRNA_synth_beta1"/>
    <property type="match status" value="1"/>
</dbReference>
<dbReference type="InterPro" id="IPR045864">
    <property type="entry name" value="aa-tRNA-synth_II/BPL/LPL"/>
</dbReference>
<dbReference type="InterPro" id="IPR005146">
    <property type="entry name" value="B3/B4_tRNA-bd"/>
</dbReference>
<dbReference type="InterPro" id="IPR009061">
    <property type="entry name" value="DNA-bd_dom_put_sf"/>
</dbReference>
<dbReference type="InterPro" id="IPR005121">
    <property type="entry name" value="Fdx_antiC-bd"/>
</dbReference>
<dbReference type="InterPro" id="IPR036690">
    <property type="entry name" value="Fdx_antiC-bd_sf"/>
</dbReference>
<dbReference type="InterPro" id="IPR012340">
    <property type="entry name" value="NA-bd_OB-fold"/>
</dbReference>
<dbReference type="InterPro" id="IPR045060">
    <property type="entry name" value="Phe-tRNA-ligase_IIc_bsu"/>
</dbReference>
<dbReference type="InterPro" id="IPR004532">
    <property type="entry name" value="Phe-tRNA-ligase_IIc_bsu_bact"/>
</dbReference>
<dbReference type="InterPro" id="IPR020825">
    <property type="entry name" value="Phe-tRNA_synthase-like_B3/B4"/>
</dbReference>
<dbReference type="InterPro" id="IPR041616">
    <property type="entry name" value="PheRS_beta_core"/>
</dbReference>
<dbReference type="InterPro" id="IPR002547">
    <property type="entry name" value="tRNA-bd_dom"/>
</dbReference>
<dbReference type="InterPro" id="IPR033714">
    <property type="entry name" value="tRNA_bind_bactPheRS"/>
</dbReference>
<dbReference type="InterPro" id="IPR005147">
    <property type="entry name" value="tRNA_synthase_B5-dom"/>
</dbReference>
<dbReference type="NCBIfam" id="TIGR00472">
    <property type="entry name" value="pheT_bact"/>
    <property type="match status" value="1"/>
</dbReference>
<dbReference type="PANTHER" id="PTHR10947:SF0">
    <property type="entry name" value="PHENYLALANINE--TRNA LIGASE BETA SUBUNIT"/>
    <property type="match status" value="1"/>
</dbReference>
<dbReference type="PANTHER" id="PTHR10947">
    <property type="entry name" value="PHENYLALANYL-TRNA SYNTHETASE BETA CHAIN AND LEUCINE-RICH REPEAT-CONTAINING PROTEIN 47"/>
    <property type="match status" value="1"/>
</dbReference>
<dbReference type="Pfam" id="PF03483">
    <property type="entry name" value="B3_4"/>
    <property type="match status" value="1"/>
</dbReference>
<dbReference type="Pfam" id="PF03484">
    <property type="entry name" value="B5"/>
    <property type="match status" value="1"/>
</dbReference>
<dbReference type="Pfam" id="PF03147">
    <property type="entry name" value="FDX-ACB"/>
    <property type="match status" value="1"/>
</dbReference>
<dbReference type="Pfam" id="PF01588">
    <property type="entry name" value="tRNA_bind"/>
    <property type="match status" value="1"/>
</dbReference>
<dbReference type="Pfam" id="PF17759">
    <property type="entry name" value="tRNA_synthFbeta"/>
    <property type="match status" value="1"/>
</dbReference>
<dbReference type="SMART" id="SM00873">
    <property type="entry name" value="B3_4"/>
    <property type="match status" value="1"/>
</dbReference>
<dbReference type="SMART" id="SM00874">
    <property type="entry name" value="B5"/>
    <property type="match status" value="1"/>
</dbReference>
<dbReference type="SMART" id="SM00896">
    <property type="entry name" value="FDX-ACB"/>
    <property type="match status" value="1"/>
</dbReference>
<dbReference type="SUPFAM" id="SSF54991">
    <property type="entry name" value="Anticodon-binding domain of PheRS"/>
    <property type="match status" value="1"/>
</dbReference>
<dbReference type="SUPFAM" id="SSF55681">
    <property type="entry name" value="Class II aaRS and biotin synthetases"/>
    <property type="match status" value="1"/>
</dbReference>
<dbReference type="SUPFAM" id="SSF50249">
    <property type="entry name" value="Nucleic acid-binding proteins"/>
    <property type="match status" value="1"/>
</dbReference>
<dbReference type="SUPFAM" id="SSF56037">
    <property type="entry name" value="PheT/TilS domain"/>
    <property type="match status" value="1"/>
</dbReference>
<dbReference type="SUPFAM" id="SSF46955">
    <property type="entry name" value="Putative DNA-binding domain"/>
    <property type="match status" value="1"/>
</dbReference>
<dbReference type="PROSITE" id="PS51483">
    <property type="entry name" value="B5"/>
    <property type="match status" value="1"/>
</dbReference>
<dbReference type="PROSITE" id="PS51447">
    <property type="entry name" value="FDX_ACB"/>
    <property type="match status" value="1"/>
</dbReference>
<dbReference type="PROSITE" id="PS50886">
    <property type="entry name" value="TRBD"/>
    <property type="match status" value="1"/>
</dbReference>
<sequence>MLVPLSLLQKFFSSPLSIEEILQACDRIGIEAECSNVFPDSLNTVVTGKILSASPHPDAERLTVAIVFDGKGERQIICGAPNCRAGIIVPIALPGAKLRNASGEITTIKKAKVRGLESQGMCCGADELGFPHLQKAERGIFEFPADTPLGESACMLLAGAPLECSLTPNLGHCASLLGLAREISFLSPVSLNIPEEFSFASLPQETSICDMHDAGACPIFYSVKISGLSCRRSPEYLQAALTALGQKPLNAIVDITNYVMLSLGQPLHAYDSQAVEQKSLHAATLQSAQPLTLLNQETYTLPAGSLVVADQHNILGLAGVMGSAASSCSENTTEIILEAAYFQPQAVRKYQRTIQLHTEAAYRFTRGVDPQGVLPVLHAAIHMIQSLFPDAQISPIQKIGDDSFSPLSLSVRPKTIKRLLDIEFSTAEIVAKLSSLGFQTAVEEQAVRVEVPSYRHDIQEETDLVEEICRTTPFVQKTQKILPTYTPIYSLKRELTAFLANGGLQQFFTYSLLDTEVSSLSLQESSLIPVQNSSWKLRDSLLPGMLKSAATNLHRQAPYVYAFEIGNVYSKEQNRYQEEERVAILLSRQVMDDSWQGKTPLSFYTIKGWVEKLLCQSGASIEDFSLQPSQHPNFHPYQQAALYQKKHLLGIFGTLHPQLCRKAQIKHDVVFAELSLNVLLSLKKKSGPHYVPYPIYPASSRDITITIDRDLPADLVRRELLSFESKWLESVHIVSVYQGRDSASQSKNVSLRMVFRDHERTLSGQEIEEEYERLTALLDKKLANIGQGNS</sequence>
<proteinExistence type="inferred from homology"/>
<comment type="catalytic activity">
    <reaction evidence="1">
        <text>tRNA(Phe) + L-phenylalanine + ATP = L-phenylalanyl-tRNA(Phe) + AMP + diphosphate + H(+)</text>
        <dbReference type="Rhea" id="RHEA:19413"/>
        <dbReference type="Rhea" id="RHEA-COMP:9668"/>
        <dbReference type="Rhea" id="RHEA-COMP:9699"/>
        <dbReference type="ChEBI" id="CHEBI:15378"/>
        <dbReference type="ChEBI" id="CHEBI:30616"/>
        <dbReference type="ChEBI" id="CHEBI:33019"/>
        <dbReference type="ChEBI" id="CHEBI:58095"/>
        <dbReference type="ChEBI" id="CHEBI:78442"/>
        <dbReference type="ChEBI" id="CHEBI:78531"/>
        <dbReference type="ChEBI" id="CHEBI:456215"/>
        <dbReference type="EC" id="6.1.1.20"/>
    </reaction>
</comment>
<comment type="cofactor">
    <cofactor evidence="1">
        <name>Mg(2+)</name>
        <dbReference type="ChEBI" id="CHEBI:18420"/>
    </cofactor>
    <text evidence="1">Binds 2 magnesium ions per tetramer.</text>
</comment>
<comment type="subunit">
    <text evidence="1">Tetramer of two alpha and two beta subunits.</text>
</comment>
<comment type="subcellular location">
    <subcellularLocation>
        <location evidence="1">Cytoplasm</location>
    </subcellularLocation>
</comment>
<comment type="similarity">
    <text evidence="1">Belongs to the phenylalanyl-tRNA synthetase beta subunit family. Type 1 subfamily.</text>
</comment>
<organism>
    <name type="scientific">Chlamydia trachomatis serovar A (strain ATCC VR-571B / DSM 19440 / HAR-13)</name>
    <dbReference type="NCBI Taxonomy" id="315277"/>
    <lineage>
        <taxon>Bacteria</taxon>
        <taxon>Pseudomonadati</taxon>
        <taxon>Chlamydiota</taxon>
        <taxon>Chlamydiia</taxon>
        <taxon>Chlamydiales</taxon>
        <taxon>Chlamydiaceae</taxon>
        <taxon>Chlamydia/Chlamydophila group</taxon>
        <taxon>Chlamydia</taxon>
    </lineage>
</organism>